<name>SECA_MANSM</name>
<dbReference type="EC" id="7.4.2.8" evidence="1"/>
<dbReference type="EMBL" id="AE016827">
    <property type="protein sequence ID" value="AAU36934.1"/>
    <property type="molecule type" value="Genomic_DNA"/>
</dbReference>
<dbReference type="RefSeq" id="WP_011199509.1">
    <property type="nucleotide sequence ID" value="NC_006300.1"/>
</dbReference>
<dbReference type="SMR" id="Q65VS6"/>
<dbReference type="STRING" id="221988.MS0327"/>
<dbReference type="KEGG" id="msu:MS0327"/>
<dbReference type="eggNOG" id="COG0653">
    <property type="taxonomic scope" value="Bacteria"/>
</dbReference>
<dbReference type="HOGENOM" id="CLU_005314_3_0_6"/>
<dbReference type="OrthoDB" id="9805579at2"/>
<dbReference type="Proteomes" id="UP000000607">
    <property type="component" value="Chromosome"/>
</dbReference>
<dbReference type="GO" id="GO:0031522">
    <property type="term" value="C:cell envelope Sec protein transport complex"/>
    <property type="evidence" value="ECO:0007669"/>
    <property type="project" value="TreeGrafter"/>
</dbReference>
<dbReference type="GO" id="GO:0005829">
    <property type="term" value="C:cytosol"/>
    <property type="evidence" value="ECO:0007669"/>
    <property type="project" value="TreeGrafter"/>
</dbReference>
<dbReference type="GO" id="GO:0005886">
    <property type="term" value="C:plasma membrane"/>
    <property type="evidence" value="ECO:0007669"/>
    <property type="project" value="UniProtKB-SubCell"/>
</dbReference>
<dbReference type="GO" id="GO:0005524">
    <property type="term" value="F:ATP binding"/>
    <property type="evidence" value="ECO:0007669"/>
    <property type="project" value="UniProtKB-UniRule"/>
</dbReference>
<dbReference type="GO" id="GO:0046872">
    <property type="term" value="F:metal ion binding"/>
    <property type="evidence" value="ECO:0007669"/>
    <property type="project" value="UniProtKB-KW"/>
</dbReference>
<dbReference type="GO" id="GO:0008564">
    <property type="term" value="F:protein-exporting ATPase activity"/>
    <property type="evidence" value="ECO:0007669"/>
    <property type="project" value="UniProtKB-EC"/>
</dbReference>
<dbReference type="GO" id="GO:0065002">
    <property type="term" value="P:intracellular protein transmembrane transport"/>
    <property type="evidence" value="ECO:0007669"/>
    <property type="project" value="UniProtKB-UniRule"/>
</dbReference>
<dbReference type="GO" id="GO:0017038">
    <property type="term" value="P:protein import"/>
    <property type="evidence" value="ECO:0007669"/>
    <property type="project" value="InterPro"/>
</dbReference>
<dbReference type="GO" id="GO:0006605">
    <property type="term" value="P:protein targeting"/>
    <property type="evidence" value="ECO:0007669"/>
    <property type="project" value="UniProtKB-UniRule"/>
</dbReference>
<dbReference type="GO" id="GO:0043952">
    <property type="term" value="P:protein transport by the Sec complex"/>
    <property type="evidence" value="ECO:0007669"/>
    <property type="project" value="TreeGrafter"/>
</dbReference>
<dbReference type="CDD" id="cd17928">
    <property type="entry name" value="DEXDc_SecA"/>
    <property type="match status" value="1"/>
</dbReference>
<dbReference type="CDD" id="cd18803">
    <property type="entry name" value="SF2_C_secA"/>
    <property type="match status" value="1"/>
</dbReference>
<dbReference type="FunFam" id="1.10.3060.10:FF:000001">
    <property type="entry name" value="Preprotein translocase subunit SecA"/>
    <property type="match status" value="1"/>
</dbReference>
<dbReference type="FunFam" id="3.40.50.300:FF:000113">
    <property type="entry name" value="Preprotein translocase subunit SecA"/>
    <property type="match status" value="1"/>
</dbReference>
<dbReference type="FunFam" id="3.90.1440.10:FF:000001">
    <property type="entry name" value="Preprotein translocase subunit SecA"/>
    <property type="match status" value="1"/>
</dbReference>
<dbReference type="Gene3D" id="1.10.3060.10">
    <property type="entry name" value="Helical scaffold and wing domains of SecA"/>
    <property type="match status" value="1"/>
</dbReference>
<dbReference type="Gene3D" id="3.40.50.300">
    <property type="entry name" value="P-loop containing nucleotide triphosphate hydrolases"/>
    <property type="match status" value="2"/>
</dbReference>
<dbReference type="Gene3D" id="3.90.1440.10">
    <property type="entry name" value="SecA, preprotein cross-linking domain"/>
    <property type="match status" value="1"/>
</dbReference>
<dbReference type="HAMAP" id="MF_01382">
    <property type="entry name" value="SecA"/>
    <property type="match status" value="1"/>
</dbReference>
<dbReference type="InterPro" id="IPR014001">
    <property type="entry name" value="Helicase_ATP-bd"/>
</dbReference>
<dbReference type="InterPro" id="IPR001650">
    <property type="entry name" value="Helicase_C-like"/>
</dbReference>
<dbReference type="InterPro" id="IPR027417">
    <property type="entry name" value="P-loop_NTPase"/>
</dbReference>
<dbReference type="InterPro" id="IPR004027">
    <property type="entry name" value="SEC_C_motif"/>
</dbReference>
<dbReference type="InterPro" id="IPR000185">
    <property type="entry name" value="SecA"/>
</dbReference>
<dbReference type="InterPro" id="IPR020937">
    <property type="entry name" value="SecA_CS"/>
</dbReference>
<dbReference type="InterPro" id="IPR011115">
    <property type="entry name" value="SecA_DEAD"/>
</dbReference>
<dbReference type="InterPro" id="IPR014018">
    <property type="entry name" value="SecA_motor_DEAD"/>
</dbReference>
<dbReference type="InterPro" id="IPR011130">
    <property type="entry name" value="SecA_preprotein_X-link_dom"/>
</dbReference>
<dbReference type="InterPro" id="IPR044722">
    <property type="entry name" value="SecA_SF2_C"/>
</dbReference>
<dbReference type="InterPro" id="IPR011116">
    <property type="entry name" value="SecA_Wing/Scaffold"/>
</dbReference>
<dbReference type="InterPro" id="IPR036266">
    <property type="entry name" value="SecA_Wing/Scaffold_sf"/>
</dbReference>
<dbReference type="InterPro" id="IPR036670">
    <property type="entry name" value="SecA_X-link_sf"/>
</dbReference>
<dbReference type="NCBIfam" id="NF009538">
    <property type="entry name" value="PRK12904.1"/>
    <property type="match status" value="1"/>
</dbReference>
<dbReference type="NCBIfam" id="TIGR00963">
    <property type="entry name" value="secA"/>
    <property type="match status" value="1"/>
</dbReference>
<dbReference type="PANTHER" id="PTHR30612:SF0">
    <property type="entry name" value="CHLOROPLAST PROTEIN-TRANSPORTING ATPASE"/>
    <property type="match status" value="1"/>
</dbReference>
<dbReference type="PANTHER" id="PTHR30612">
    <property type="entry name" value="SECA INNER MEMBRANE COMPONENT OF SEC PROTEIN SECRETION SYSTEM"/>
    <property type="match status" value="1"/>
</dbReference>
<dbReference type="Pfam" id="PF21090">
    <property type="entry name" value="P-loop_SecA"/>
    <property type="match status" value="1"/>
</dbReference>
<dbReference type="Pfam" id="PF02810">
    <property type="entry name" value="SEC-C"/>
    <property type="match status" value="1"/>
</dbReference>
<dbReference type="Pfam" id="PF07517">
    <property type="entry name" value="SecA_DEAD"/>
    <property type="match status" value="1"/>
</dbReference>
<dbReference type="Pfam" id="PF01043">
    <property type="entry name" value="SecA_PP_bind"/>
    <property type="match status" value="1"/>
</dbReference>
<dbReference type="Pfam" id="PF07516">
    <property type="entry name" value="SecA_SW"/>
    <property type="match status" value="1"/>
</dbReference>
<dbReference type="PRINTS" id="PR00906">
    <property type="entry name" value="SECA"/>
</dbReference>
<dbReference type="SMART" id="SM00957">
    <property type="entry name" value="SecA_DEAD"/>
    <property type="match status" value="1"/>
</dbReference>
<dbReference type="SMART" id="SM00958">
    <property type="entry name" value="SecA_PP_bind"/>
    <property type="match status" value="1"/>
</dbReference>
<dbReference type="SUPFAM" id="SSF81886">
    <property type="entry name" value="Helical scaffold and wing domains of SecA"/>
    <property type="match status" value="1"/>
</dbReference>
<dbReference type="SUPFAM" id="SSF52540">
    <property type="entry name" value="P-loop containing nucleoside triphosphate hydrolases"/>
    <property type="match status" value="2"/>
</dbReference>
<dbReference type="SUPFAM" id="SSF81767">
    <property type="entry name" value="Pre-protein crosslinking domain of SecA"/>
    <property type="match status" value="1"/>
</dbReference>
<dbReference type="PROSITE" id="PS01312">
    <property type="entry name" value="SECA"/>
    <property type="match status" value="1"/>
</dbReference>
<dbReference type="PROSITE" id="PS51196">
    <property type="entry name" value="SECA_MOTOR_DEAD"/>
    <property type="match status" value="1"/>
</dbReference>
<keyword id="KW-0067">ATP-binding</keyword>
<keyword id="KW-0997">Cell inner membrane</keyword>
<keyword id="KW-1003">Cell membrane</keyword>
<keyword id="KW-0963">Cytoplasm</keyword>
<keyword id="KW-0472">Membrane</keyword>
<keyword id="KW-0479">Metal-binding</keyword>
<keyword id="KW-0547">Nucleotide-binding</keyword>
<keyword id="KW-0653">Protein transport</keyword>
<keyword id="KW-1278">Translocase</keyword>
<keyword id="KW-0811">Translocation</keyword>
<keyword id="KW-0813">Transport</keyword>
<keyword id="KW-0862">Zinc</keyword>
<gene>
    <name evidence="1" type="primary">secA</name>
    <name type="ordered locus">MS0327</name>
</gene>
<proteinExistence type="inferred from homology"/>
<protein>
    <recommendedName>
        <fullName evidence="1">Protein translocase subunit SecA</fullName>
        <ecNumber evidence="1">7.4.2.8</ecNumber>
    </recommendedName>
</protein>
<sequence length="896" mass="101219">MLKTIATKIFGSRNDRVLRKLNKVVKKINGLEPAFSALTDDELKAKTAEFRARLEKGESLESLMPEAFATVREASRRVLGMRHFDVQLIGGMVLTNRNIAEMRTGEGKTLTATLPCYLNALTGKGVHVVTVNDYLANRDAETNRPLFEFLGMTVGVNIPGLPPEVKRAAYQADITYATNSELGFDYLRDNLAHSKEERFQRQLHYALVDEVDSILIDEARTPLIISGPAEDSSELYIAIDKLIPLLVKQDKEDTEEYQGDGDFTLDLKTKQAHLTERGQEKCENWLIENGFMTENESLYSPAKIGLVHHIYAALRAHTLFERDVDYIVKDGEIVIVDEHTGRTMAGRRWSDGLHQAIEAKEHVKIQGENQTVASITYQNYFRLYEKLAGMTGTADTEAFEFQQIYGLETIVIPTNRPMIRDDRTDVMFESEAYKFQAIIEDIKECVARSQPVLVGTASIEKSELLSNELDKAGIPHNVLNAKFHAQEAEIIANAGYPGAVTIATNMAGRGTDIVLGGNWRAEAAKLENPTEEQLEALKAAWQERHDVVMKAGGLHIIGTERHESRRIDNQLRGRSGRQGDPGSSRFYLSLDDSLMRIYLNEGKLNMMRKAFSTPGEAMESKLLAKVIASAQAKVEAHNFDGRKNLLQFDDVANDQRHAIYAQRNDLLDHEDISETIKAIREDVYNEVIDQYIPPQSLEEQWNIAELEKRLKQDFALDLPIQQWLEEDNQLHEDNLRERIIASAVEEYQHKEEIVGAETMRNFEKGVMLQTLDELWKEHLAAMDQLRKGIHLRGYAQKDPKQEYKKESFQMFTEMLDALKLTVIRTLSRVQVRTQEEAQAEAAQQAAAESKDYADDSASGERSVAQTTQRIGRNDPCPCGSGKKYKHCHGNRAAHEA</sequence>
<evidence type="ECO:0000255" key="1">
    <source>
        <dbReference type="HAMAP-Rule" id="MF_01382"/>
    </source>
</evidence>
<evidence type="ECO:0000256" key="2">
    <source>
        <dbReference type="SAM" id="MobiDB-lite"/>
    </source>
</evidence>
<comment type="function">
    <text evidence="1">Part of the Sec protein translocase complex. Interacts with the SecYEG preprotein conducting channel. Has a central role in coupling the hydrolysis of ATP to the transfer of proteins into and across the cell membrane, serving both as a receptor for the preprotein-SecB complex and as an ATP-driven molecular motor driving the stepwise translocation of polypeptide chains across the membrane.</text>
</comment>
<comment type="catalytic activity">
    <reaction evidence="1">
        <text>ATP + H2O + cellular proteinSide 1 = ADP + phosphate + cellular proteinSide 2.</text>
        <dbReference type="EC" id="7.4.2.8"/>
    </reaction>
</comment>
<comment type="cofactor">
    <cofactor evidence="1">
        <name>Zn(2+)</name>
        <dbReference type="ChEBI" id="CHEBI:29105"/>
    </cofactor>
    <text evidence="1">May bind 1 zinc ion per subunit.</text>
</comment>
<comment type="subunit">
    <text evidence="1">Monomer and homodimer. Part of the essential Sec protein translocation apparatus which comprises SecA, SecYEG and auxiliary proteins SecDF-YajC and YidC.</text>
</comment>
<comment type="subcellular location">
    <subcellularLocation>
        <location evidence="1">Cell inner membrane</location>
        <topology evidence="1">Peripheral membrane protein</topology>
        <orientation evidence="1">Cytoplasmic side</orientation>
    </subcellularLocation>
    <subcellularLocation>
        <location evidence="1">Cytoplasm</location>
    </subcellularLocation>
    <text evidence="1">Distribution is 50-50.</text>
</comment>
<comment type="similarity">
    <text evidence="1">Belongs to the SecA family.</text>
</comment>
<feature type="chain" id="PRO_0000320845" description="Protein translocase subunit SecA">
    <location>
        <begin position="1"/>
        <end position="896"/>
    </location>
</feature>
<feature type="region of interest" description="Disordered" evidence="2">
    <location>
        <begin position="565"/>
        <end position="584"/>
    </location>
</feature>
<feature type="region of interest" description="Disordered" evidence="2">
    <location>
        <begin position="840"/>
        <end position="896"/>
    </location>
</feature>
<feature type="compositionally biased region" description="Basic residues" evidence="2">
    <location>
        <begin position="882"/>
        <end position="896"/>
    </location>
</feature>
<feature type="binding site" evidence="1">
    <location>
        <position position="87"/>
    </location>
    <ligand>
        <name>ATP</name>
        <dbReference type="ChEBI" id="CHEBI:30616"/>
    </ligand>
</feature>
<feature type="binding site" evidence="1">
    <location>
        <begin position="105"/>
        <end position="109"/>
    </location>
    <ligand>
        <name>ATP</name>
        <dbReference type="ChEBI" id="CHEBI:30616"/>
    </ligand>
</feature>
<feature type="binding site" evidence="1">
    <location>
        <position position="512"/>
    </location>
    <ligand>
        <name>ATP</name>
        <dbReference type="ChEBI" id="CHEBI:30616"/>
    </ligand>
</feature>
<feature type="binding site" evidence="1">
    <location>
        <position position="876"/>
    </location>
    <ligand>
        <name>Zn(2+)</name>
        <dbReference type="ChEBI" id="CHEBI:29105"/>
    </ligand>
</feature>
<feature type="binding site" evidence="1">
    <location>
        <position position="878"/>
    </location>
    <ligand>
        <name>Zn(2+)</name>
        <dbReference type="ChEBI" id="CHEBI:29105"/>
    </ligand>
</feature>
<feature type="binding site" evidence="1">
    <location>
        <position position="887"/>
    </location>
    <ligand>
        <name>Zn(2+)</name>
        <dbReference type="ChEBI" id="CHEBI:29105"/>
    </ligand>
</feature>
<feature type="binding site" evidence="1">
    <location>
        <position position="888"/>
    </location>
    <ligand>
        <name>Zn(2+)</name>
        <dbReference type="ChEBI" id="CHEBI:29105"/>
    </ligand>
</feature>
<organism>
    <name type="scientific">Mannheimia succiniciproducens (strain KCTC 0769BP / MBEL55E)</name>
    <dbReference type="NCBI Taxonomy" id="221988"/>
    <lineage>
        <taxon>Bacteria</taxon>
        <taxon>Pseudomonadati</taxon>
        <taxon>Pseudomonadota</taxon>
        <taxon>Gammaproteobacteria</taxon>
        <taxon>Pasteurellales</taxon>
        <taxon>Pasteurellaceae</taxon>
        <taxon>Basfia</taxon>
    </lineage>
</organism>
<accession>Q65VS6</accession>
<reference key="1">
    <citation type="journal article" date="2004" name="Nat. Biotechnol.">
        <title>The genome sequence of the capnophilic rumen bacterium Mannheimia succiniciproducens.</title>
        <authorList>
            <person name="Hong S.H."/>
            <person name="Kim J.S."/>
            <person name="Lee S.Y."/>
            <person name="In Y.H."/>
            <person name="Choi S.S."/>
            <person name="Rih J.-K."/>
            <person name="Kim C.H."/>
            <person name="Jeong H."/>
            <person name="Hur C.G."/>
            <person name="Kim J.J."/>
        </authorList>
    </citation>
    <scope>NUCLEOTIDE SEQUENCE [LARGE SCALE GENOMIC DNA]</scope>
    <source>
        <strain>KCTC 0769BP / MBEL55E</strain>
    </source>
</reference>